<proteinExistence type="evidence at transcript level"/>
<reference key="1">
    <citation type="submission" date="2006-05" db="EMBL/GenBank/DDBJ databases">
        <authorList>
            <consortium name="NIH - Mammalian Gene Collection (MGC) project"/>
        </authorList>
    </citation>
    <scope>NUCLEOTIDE SEQUENCE [LARGE SCALE MRNA]</scope>
    <source>
        <strain>Hereford</strain>
        <tissue>Fetal pons</tissue>
    </source>
</reference>
<keyword id="KW-0175">Coiled coil</keyword>
<keyword id="KW-0963">Cytoplasm</keyword>
<keyword id="KW-0507">mRNA processing</keyword>
<keyword id="KW-0508">mRNA splicing</keyword>
<keyword id="KW-0539">Nucleus</keyword>
<keyword id="KW-1185">Reference proteome</keyword>
<sequence length="234" mass="26744">MEAKSESTQASESWSSHPVYARYWQHYHQAMAWMRSHQSAYQKAVESVVTSPWYYPATDLAQSPAAKGGTSPKSRSKSPSASGDACRRRSRPGKPGPQRRSTEKPARFAEDNDSESDDCGIVCDLSNMVITDELRQYFAETEQHREELRRQHQLDAARLKDYVNADHGLYCDKRGRSTLPPTERPGERRQAEMKRLYGASAAKIQAMETAMQLSFDKHCDRKQPKYWPVIPLKF</sequence>
<feature type="chain" id="PRO_0000271400" description="Gem-associated protein 8">
    <location>
        <begin position="1"/>
        <end position="234"/>
    </location>
</feature>
<feature type="region of interest" description="Disordered" evidence="4">
    <location>
        <begin position="60"/>
        <end position="116"/>
    </location>
</feature>
<feature type="coiled-coil region" evidence="3">
    <location>
        <begin position="130"/>
        <end position="153"/>
    </location>
</feature>
<feature type="compositionally biased region" description="Low complexity" evidence="4">
    <location>
        <begin position="67"/>
        <end position="83"/>
    </location>
</feature>
<feature type="compositionally biased region" description="Basic and acidic residues" evidence="4">
    <location>
        <begin position="100"/>
        <end position="110"/>
    </location>
</feature>
<accession>Q1LZ79</accession>
<protein>
    <recommendedName>
        <fullName>Gem-associated protein 8</fullName>
        <shortName>Gemin-8</shortName>
    </recommendedName>
</protein>
<gene>
    <name type="primary">GEMIN8</name>
</gene>
<comment type="function">
    <text evidence="2">The SMN complex catalyzes the assembly of small nuclear ribonucleoproteins (snRNPs), the building blocks of the spliceosome, and thereby plays an important role in the splicing of cellular pre-mRNAs. Most spliceosomal snRNPs contain a common set of Sm proteins SNRPB, SNRPD1, SNRPD2, SNRPD3, SNRPE, SNRPF and SNRPG that assemble in a heptameric protein ring on the Sm site of the small nuclear RNA to form the core snRNP (Sm core). In the cytosol, the Sm proteins SNRPD1, SNRPD2, SNRPE, SNRPF and SNRPG are trapped in an inactive 6S pICln-Sm complex by the chaperone CLNS1A that controls the assembly of the core snRNP. To assemble core snRNPs, the SMN complex accepts the trapped 5Sm proteins from CLNS1A forming an intermediate. Binding of snRNA inside 5Sm triggers eviction of the SMN complex, thereby allowing binding of SNRPD3 and SNRPB to complete assembly of the core snRNP (By similarity).</text>
</comment>
<comment type="subunit">
    <text evidence="2">Part of the core SMN complex that contains SMN1, GEMIN2/SIP1, DDX20/GEMIN3, GEMIN4, GEMIN5, GEMIN6, GEMIN7, GEMIN8 and STRAP/UNRIP (By similarity). Part of the SMN-Sm complex that contains SMN1, GEMIN2/SIP1, DDX20/GEMIN3, GEMIN4, GEMIN5, GEMIN6, GEMIN7, GEMIN8, STRAP/UNRIP and the Sm proteins SNRPB, SNRPD1, SNRPD2, SNRPD3, SNRPE, SNRPF and SNRPG (By similarity). Interacts with GEMIN6; the interaction is direct (By similarity). Interacts with GEMIN7; the interaction is direct (By similarity). Interacts with SMN1; the interaction is direct (By similarity). Interacts with GEMIN4; the interaction is direct (By similarity).</text>
</comment>
<comment type="subcellular location">
    <subcellularLocation>
        <location evidence="2">Nucleus</location>
        <location evidence="2">Gem</location>
    </subcellularLocation>
    <subcellularLocation>
        <location evidence="2">Cytoplasm</location>
    </subcellularLocation>
    <text evidence="1">Found in nuclear bodies called gems (Gemini of Cajal bodies) that are often in proximity to Cajal (coiled) bodies. Also found in the cytoplasm (By similarity).</text>
</comment>
<name>GEMI8_BOVIN</name>
<organism>
    <name type="scientific">Bos taurus</name>
    <name type="common">Bovine</name>
    <dbReference type="NCBI Taxonomy" id="9913"/>
    <lineage>
        <taxon>Eukaryota</taxon>
        <taxon>Metazoa</taxon>
        <taxon>Chordata</taxon>
        <taxon>Craniata</taxon>
        <taxon>Vertebrata</taxon>
        <taxon>Euteleostomi</taxon>
        <taxon>Mammalia</taxon>
        <taxon>Eutheria</taxon>
        <taxon>Laurasiatheria</taxon>
        <taxon>Artiodactyla</taxon>
        <taxon>Ruminantia</taxon>
        <taxon>Pecora</taxon>
        <taxon>Bovidae</taxon>
        <taxon>Bovinae</taxon>
        <taxon>Bos</taxon>
    </lineage>
</organism>
<evidence type="ECO:0000250" key="1"/>
<evidence type="ECO:0000250" key="2">
    <source>
        <dbReference type="UniProtKB" id="Q9NWZ8"/>
    </source>
</evidence>
<evidence type="ECO:0000255" key="3"/>
<evidence type="ECO:0000256" key="4">
    <source>
        <dbReference type="SAM" id="MobiDB-lite"/>
    </source>
</evidence>
<dbReference type="EMBL" id="BC116157">
    <property type="protein sequence ID" value="AAI16158.1"/>
    <property type="molecule type" value="mRNA"/>
</dbReference>
<dbReference type="RefSeq" id="NP_001069199.1">
    <property type="nucleotide sequence ID" value="NM_001075731.2"/>
</dbReference>
<dbReference type="SMR" id="Q1LZ79"/>
<dbReference type="FunCoup" id="Q1LZ79">
    <property type="interactions" value="3517"/>
</dbReference>
<dbReference type="STRING" id="9913.ENSBTAP00000013582"/>
<dbReference type="PaxDb" id="9913-ENSBTAP00000013582"/>
<dbReference type="Ensembl" id="ENSBTAT00000013582.6">
    <property type="protein sequence ID" value="ENSBTAP00000013582.4"/>
    <property type="gene ID" value="ENSBTAG00000010289.6"/>
</dbReference>
<dbReference type="GeneID" id="515968"/>
<dbReference type="KEGG" id="bta:515968"/>
<dbReference type="CTD" id="54960"/>
<dbReference type="VEuPathDB" id="HostDB:ENSBTAG00000010289"/>
<dbReference type="VGNC" id="VGNC:29321">
    <property type="gene designation" value="GEMIN8"/>
</dbReference>
<dbReference type="eggNOG" id="ENOG502S7KA">
    <property type="taxonomic scope" value="Eukaryota"/>
</dbReference>
<dbReference type="GeneTree" id="ENSGT00390000013608"/>
<dbReference type="HOGENOM" id="CLU_073610_0_0_1"/>
<dbReference type="InParanoid" id="Q1LZ79"/>
<dbReference type="OMA" id="QYFAHTE"/>
<dbReference type="OrthoDB" id="5989213at2759"/>
<dbReference type="TreeFam" id="TF328591"/>
<dbReference type="Reactome" id="R-BTA-191859">
    <property type="pathway name" value="snRNP Assembly"/>
</dbReference>
<dbReference type="Proteomes" id="UP000009136">
    <property type="component" value="Chromosome X"/>
</dbReference>
<dbReference type="Bgee" id="ENSBTAG00000010289">
    <property type="expression patterns" value="Expressed in choroid plexus and 105 other cell types or tissues"/>
</dbReference>
<dbReference type="GO" id="GO:0005829">
    <property type="term" value="C:cytosol"/>
    <property type="evidence" value="ECO:0000250"/>
    <property type="project" value="UniProtKB"/>
</dbReference>
<dbReference type="GO" id="GO:0097504">
    <property type="term" value="C:Gemini of Cajal bodies"/>
    <property type="evidence" value="ECO:0007669"/>
    <property type="project" value="UniProtKB-SubCell"/>
</dbReference>
<dbReference type="GO" id="GO:0032797">
    <property type="term" value="C:SMN complex"/>
    <property type="evidence" value="ECO:0000250"/>
    <property type="project" value="UniProtKB"/>
</dbReference>
<dbReference type="GO" id="GO:0034719">
    <property type="term" value="C:SMN-Sm protein complex"/>
    <property type="evidence" value="ECO:0000250"/>
    <property type="project" value="UniProtKB"/>
</dbReference>
<dbReference type="GO" id="GO:0000387">
    <property type="term" value="P:spliceosomal snRNP assembly"/>
    <property type="evidence" value="ECO:0000250"/>
    <property type="project" value="UniProtKB"/>
</dbReference>
<dbReference type="InterPro" id="IPR034754">
    <property type="entry name" value="GEMIN8"/>
</dbReference>
<dbReference type="PANTHER" id="PTHR16238">
    <property type="entry name" value="GEM-ASSOCIATED PROTEIN 8"/>
    <property type="match status" value="1"/>
</dbReference>
<dbReference type="PANTHER" id="PTHR16238:SF7">
    <property type="entry name" value="GEM-ASSOCIATED PROTEIN 8"/>
    <property type="match status" value="1"/>
</dbReference>
<dbReference type="Pfam" id="PF15348">
    <property type="entry name" value="GEMIN8"/>
    <property type="match status" value="1"/>
</dbReference>